<gene>
    <name type="primary">Pik3cb</name>
</gene>
<organism>
    <name type="scientific">Rattus norvegicus</name>
    <name type="common">Rat</name>
    <dbReference type="NCBI Taxonomy" id="10116"/>
    <lineage>
        <taxon>Eukaryota</taxon>
        <taxon>Metazoa</taxon>
        <taxon>Chordata</taxon>
        <taxon>Craniata</taxon>
        <taxon>Vertebrata</taxon>
        <taxon>Euteleostomi</taxon>
        <taxon>Mammalia</taxon>
        <taxon>Eutheria</taxon>
        <taxon>Euarchontoglires</taxon>
        <taxon>Glires</taxon>
        <taxon>Rodentia</taxon>
        <taxon>Myomorpha</taxon>
        <taxon>Muroidea</taxon>
        <taxon>Muridae</taxon>
        <taxon>Murinae</taxon>
        <taxon>Rattus</taxon>
    </lineage>
</organism>
<evidence type="ECO:0000250" key="1"/>
<evidence type="ECO:0000250" key="2">
    <source>
        <dbReference type="UniProtKB" id="P42338"/>
    </source>
</evidence>
<evidence type="ECO:0000250" key="3">
    <source>
        <dbReference type="UniProtKB" id="Q8BTI9"/>
    </source>
</evidence>
<evidence type="ECO:0000255" key="4">
    <source>
        <dbReference type="PROSITE-ProRule" id="PRU00269"/>
    </source>
</evidence>
<evidence type="ECO:0000255" key="5">
    <source>
        <dbReference type="PROSITE-ProRule" id="PRU00877"/>
    </source>
</evidence>
<evidence type="ECO:0000255" key="6">
    <source>
        <dbReference type="PROSITE-ProRule" id="PRU00878"/>
    </source>
</evidence>
<evidence type="ECO:0000255" key="7">
    <source>
        <dbReference type="PROSITE-ProRule" id="PRU00879"/>
    </source>
</evidence>
<evidence type="ECO:0000255" key="8">
    <source>
        <dbReference type="PROSITE-ProRule" id="PRU00880"/>
    </source>
</evidence>
<name>PK3CB_RAT</name>
<reference key="1">
    <citation type="submission" date="1998-11" db="EMBL/GenBank/DDBJ databases">
        <title>Phosphatidylinositol-3 kinase and activation of phosphodiesterase 3B in adipocytes.</title>
        <authorList>
            <person name="Mulder H."/>
            <person name="Stenson Holst L."/>
            <person name="Degerman E."/>
        </authorList>
    </citation>
    <scope>NUCLEOTIDE SEQUENCE [MRNA]</scope>
    <source>
        <strain>Sprague-Dawley</strain>
    </source>
</reference>
<keyword id="KW-0067">ATP-binding</keyword>
<keyword id="KW-0072">Autophagy</keyword>
<keyword id="KW-0130">Cell adhesion</keyword>
<keyword id="KW-0963">Cytoplasm</keyword>
<keyword id="KW-0254">Endocytosis</keyword>
<keyword id="KW-0418">Kinase</keyword>
<keyword id="KW-0443">Lipid metabolism</keyword>
<keyword id="KW-0547">Nucleotide-binding</keyword>
<keyword id="KW-0539">Nucleus</keyword>
<keyword id="KW-0597">Phosphoprotein</keyword>
<keyword id="KW-1185">Reference proteome</keyword>
<keyword id="KW-0808">Transferase</keyword>
<dbReference type="EC" id="2.7.1.153" evidence="2"/>
<dbReference type="EC" id="2.7.11.1" evidence="2"/>
<dbReference type="EMBL" id="AJ012482">
    <property type="protein sequence ID" value="CAA10046.1"/>
    <property type="molecule type" value="mRNA"/>
</dbReference>
<dbReference type="RefSeq" id="NP_445933.1">
    <property type="nucleotide sequence ID" value="NM_053481.2"/>
</dbReference>
<dbReference type="SMR" id="Q9Z1L0"/>
<dbReference type="FunCoup" id="Q9Z1L0">
    <property type="interactions" value="2636"/>
</dbReference>
<dbReference type="IntAct" id="Q9Z1L0">
    <property type="interactions" value="9"/>
</dbReference>
<dbReference type="STRING" id="10116.ENSRNOP00000022179"/>
<dbReference type="BindingDB" id="Q9Z1L0"/>
<dbReference type="ChEMBL" id="CHEMBL3608198"/>
<dbReference type="DrugCentral" id="Q9Z1L0"/>
<dbReference type="iPTMnet" id="Q9Z1L0"/>
<dbReference type="PhosphoSitePlus" id="Q9Z1L0"/>
<dbReference type="PaxDb" id="10116-ENSRNOP00000022179"/>
<dbReference type="GeneID" id="85243"/>
<dbReference type="KEGG" id="rno:85243"/>
<dbReference type="UCSC" id="RGD:620917">
    <property type="organism name" value="rat"/>
</dbReference>
<dbReference type="AGR" id="RGD:620917"/>
<dbReference type="CTD" id="5291"/>
<dbReference type="RGD" id="620917">
    <property type="gene designation" value="Pik3cb"/>
</dbReference>
<dbReference type="eggNOG" id="KOG0904">
    <property type="taxonomic scope" value="Eukaryota"/>
</dbReference>
<dbReference type="InParanoid" id="Q9Z1L0"/>
<dbReference type="OrthoDB" id="67688at2759"/>
<dbReference type="PhylomeDB" id="Q9Z1L0"/>
<dbReference type="BRENDA" id="2.7.1.153">
    <property type="organism ID" value="5301"/>
</dbReference>
<dbReference type="Reactome" id="R-RNO-109704">
    <property type="pathway name" value="PI3K Cascade"/>
</dbReference>
<dbReference type="Reactome" id="R-RNO-112399">
    <property type="pathway name" value="IRS-mediated signalling"/>
</dbReference>
<dbReference type="Reactome" id="R-RNO-114604">
    <property type="pathway name" value="GPVI-mediated activation cascade"/>
</dbReference>
<dbReference type="Reactome" id="R-RNO-1257604">
    <property type="pathway name" value="PIP3 activates AKT signaling"/>
</dbReference>
<dbReference type="Reactome" id="R-RNO-1660499">
    <property type="pathway name" value="Synthesis of PIPs at the plasma membrane"/>
</dbReference>
<dbReference type="Reactome" id="R-RNO-186763">
    <property type="pathway name" value="Downstream signal transduction"/>
</dbReference>
<dbReference type="Reactome" id="R-RNO-198203">
    <property type="pathway name" value="PI3K/AKT activation"/>
</dbReference>
<dbReference type="Reactome" id="R-RNO-201556">
    <property type="pathway name" value="Signaling by ALK"/>
</dbReference>
<dbReference type="Reactome" id="R-RNO-202424">
    <property type="pathway name" value="Downstream TCR signaling"/>
</dbReference>
<dbReference type="Reactome" id="R-RNO-2029485">
    <property type="pathway name" value="Role of phospholipids in phagocytosis"/>
</dbReference>
<dbReference type="Reactome" id="R-RNO-210993">
    <property type="pathway name" value="Tie2 Signaling"/>
</dbReference>
<dbReference type="Reactome" id="R-RNO-2424491">
    <property type="pathway name" value="DAP12 signaling"/>
</dbReference>
<dbReference type="Reactome" id="R-RNO-2730905">
    <property type="pathway name" value="Role of LAT2/NTAL/LAB on calcium mobilization"/>
</dbReference>
<dbReference type="Reactome" id="R-RNO-389357">
    <property type="pathway name" value="CD28 dependent PI3K/Akt signaling"/>
</dbReference>
<dbReference type="Reactome" id="R-RNO-4420097">
    <property type="pathway name" value="VEGFA-VEGFR2 Pathway"/>
</dbReference>
<dbReference type="Reactome" id="R-RNO-512988">
    <property type="pathway name" value="Interleukin-3, Interleukin-5 and GM-CSF signaling"/>
</dbReference>
<dbReference type="Reactome" id="R-RNO-5673001">
    <property type="pathway name" value="RAF/MAP kinase cascade"/>
</dbReference>
<dbReference type="Reactome" id="R-RNO-6811558">
    <property type="pathway name" value="PI5P, PP2A and IER3 Regulate PI3K/AKT Signaling"/>
</dbReference>
<dbReference type="Reactome" id="R-RNO-8853659">
    <property type="pathway name" value="RET signaling"/>
</dbReference>
<dbReference type="Reactome" id="R-RNO-9027276">
    <property type="pathway name" value="Erythropoietin activates Phosphoinositide-3-kinase (PI3K)"/>
</dbReference>
<dbReference type="Reactome" id="R-RNO-912526">
    <property type="pathway name" value="Interleukin receptor SHC signaling"/>
</dbReference>
<dbReference type="Reactome" id="R-RNO-912631">
    <property type="pathway name" value="Regulation of signaling by CBL"/>
</dbReference>
<dbReference type="Reactome" id="R-RNO-9842663">
    <property type="pathway name" value="Signaling by LTK"/>
</dbReference>
<dbReference type="Reactome" id="R-RNO-9927354">
    <property type="pathway name" value="Co-stimulation by ICOS"/>
</dbReference>
<dbReference type="UniPathway" id="UPA00220"/>
<dbReference type="PRO" id="PR:Q9Z1L0"/>
<dbReference type="Proteomes" id="UP000002494">
    <property type="component" value="Unplaced"/>
</dbReference>
<dbReference type="GO" id="GO:0031526">
    <property type="term" value="C:brush border membrane"/>
    <property type="evidence" value="ECO:0000314"/>
    <property type="project" value="RGD"/>
</dbReference>
<dbReference type="GO" id="GO:0005737">
    <property type="term" value="C:cytoplasm"/>
    <property type="evidence" value="ECO:0000266"/>
    <property type="project" value="RGD"/>
</dbReference>
<dbReference type="GO" id="GO:0005829">
    <property type="term" value="C:cytosol"/>
    <property type="evidence" value="ECO:0000304"/>
    <property type="project" value="Reactome"/>
</dbReference>
<dbReference type="GO" id="GO:0005634">
    <property type="term" value="C:nucleus"/>
    <property type="evidence" value="ECO:0000266"/>
    <property type="project" value="RGD"/>
</dbReference>
<dbReference type="GO" id="GO:0005942">
    <property type="term" value="C:phosphatidylinositol 3-kinase complex"/>
    <property type="evidence" value="ECO:0000314"/>
    <property type="project" value="RGD"/>
</dbReference>
<dbReference type="GO" id="GO:0005943">
    <property type="term" value="C:phosphatidylinositol 3-kinase complex, class IA"/>
    <property type="evidence" value="ECO:0000266"/>
    <property type="project" value="RGD"/>
</dbReference>
<dbReference type="GO" id="GO:0005886">
    <property type="term" value="C:plasma membrane"/>
    <property type="evidence" value="ECO:0000318"/>
    <property type="project" value="GO_Central"/>
</dbReference>
<dbReference type="GO" id="GO:0016303">
    <property type="term" value="F:1-phosphatidylinositol-3-kinase activity"/>
    <property type="evidence" value="ECO:0000314"/>
    <property type="project" value="RGD"/>
</dbReference>
<dbReference type="GO" id="GO:0046934">
    <property type="term" value="F:1-phosphatidylinositol-4,5-bisphosphate 3-kinase activity"/>
    <property type="evidence" value="ECO:0000250"/>
    <property type="project" value="UniProtKB"/>
</dbReference>
<dbReference type="GO" id="GO:0035005">
    <property type="term" value="F:1-phosphatidylinositol-4-phosphate 3-kinase activity"/>
    <property type="evidence" value="ECO:0000318"/>
    <property type="project" value="GO_Central"/>
</dbReference>
<dbReference type="GO" id="GO:0005524">
    <property type="term" value="F:ATP binding"/>
    <property type="evidence" value="ECO:0007669"/>
    <property type="project" value="UniProtKB-KW"/>
</dbReference>
<dbReference type="GO" id="GO:0043560">
    <property type="term" value="F:insulin receptor substrate binding"/>
    <property type="evidence" value="ECO:0000266"/>
    <property type="project" value="RGD"/>
</dbReference>
<dbReference type="GO" id="GO:0106310">
    <property type="term" value="F:protein serine kinase activity"/>
    <property type="evidence" value="ECO:0000250"/>
    <property type="project" value="UniProtKB"/>
</dbReference>
<dbReference type="GO" id="GO:0060055">
    <property type="term" value="P:angiogenesis involved in wound healing"/>
    <property type="evidence" value="ECO:0000266"/>
    <property type="project" value="RGD"/>
</dbReference>
<dbReference type="GO" id="GO:0006914">
    <property type="term" value="P:autophagy"/>
    <property type="evidence" value="ECO:0007669"/>
    <property type="project" value="UniProtKB-KW"/>
</dbReference>
<dbReference type="GO" id="GO:0016477">
    <property type="term" value="P:cell migration"/>
    <property type="evidence" value="ECO:0000318"/>
    <property type="project" value="GO_Central"/>
</dbReference>
<dbReference type="GO" id="GO:0040016">
    <property type="term" value="P:embryonic cleavage"/>
    <property type="evidence" value="ECO:0000266"/>
    <property type="project" value="RGD"/>
</dbReference>
<dbReference type="GO" id="GO:0006897">
    <property type="term" value="P:endocytosis"/>
    <property type="evidence" value="ECO:0007669"/>
    <property type="project" value="UniProtKB-KW"/>
</dbReference>
<dbReference type="GO" id="GO:0001935">
    <property type="term" value="P:endothelial cell proliferation"/>
    <property type="evidence" value="ECO:0000266"/>
    <property type="project" value="RGD"/>
</dbReference>
<dbReference type="GO" id="GO:0007156">
    <property type="term" value="P:homophilic cell adhesion via plasma membrane adhesion molecules"/>
    <property type="evidence" value="ECO:0000266"/>
    <property type="project" value="RGD"/>
</dbReference>
<dbReference type="GO" id="GO:0006874">
    <property type="term" value="P:intracellular calcium ion homeostasis"/>
    <property type="evidence" value="ECO:0000266"/>
    <property type="project" value="RGD"/>
</dbReference>
<dbReference type="GO" id="GO:0042267">
    <property type="term" value="P:natural killer cell mediated cytotoxicity"/>
    <property type="evidence" value="ECO:0000266"/>
    <property type="project" value="RGD"/>
</dbReference>
<dbReference type="GO" id="GO:1903298">
    <property type="term" value="P:negative regulation of hypoxia-induced intrinsic apoptotic signaling pathway"/>
    <property type="evidence" value="ECO:0000266"/>
    <property type="project" value="RGD"/>
</dbReference>
<dbReference type="GO" id="GO:0043409">
    <property type="term" value="P:negative regulation of MAPK cascade"/>
    <property type="evidence" value="ECO:0000266"/>
    <property type="project" value="RGD"/>
</dbReference>
<dbReference type="GO" id="GO:0051898">
    <property type="term" value="P:negative regulation of phosphatidylinositol 3-kinase/protein kinase B signal transduction"/>
    <property type="evidence" value="ECO:0000266"/>
    <property type="project" value="RGD"/>
</dbReference>
<dbReference type="GO" id="GO:1903671">
    <property type="term" value="P:negative regulation of sprouting angiogenesis"/>
    <property type="evidence" value="ECO:0000266"/>
    <property type="project" value="RGD"/>
</dbReference>
<dbReference type="GO" id="GO:1900747">
    <property type="term" value="P:negative regulation of vascular endothelial growth factor signaling pathway"/>
    <property type="evidence" value="ECO:0000266"/>
    <property type="project" value="RGD"/>
</dbReference>
<dbReference type="GO" id="GO:0043491">
    <property type="term" value="P:phosphatidylinositol 3-kinase/protein kinase B signal transduction"/>
    <property type="evidence" value="ECO:0000266"/>
    <property type="project" value="RGD"/>
</dbReference>
<dbReference type="GO" id="GO:0046854">
    <property type="term" value="P:phosphatidylinositol phosphate biosynthetic process"/>
    <property type="evidence" value="ECO:0000314"/>
    <property type="project" value="RGD"/>
</dbReference>
<dbReference type="GO" id="GO:0036092">
    <property type="term" value="P:phosphatidylinositol-3-phosphate biosynthetic process"/>
    <property type="evidence" value="ECO:0000318"/>
    <property type="project" value="GO_Central"/>
</dbReference>
<dbReference type="GO" id="GO:0048015">
    <property type="term" value="P:phosphatidylinositol-mediated signaling"/>
    <property type="evidence" value="ECO:0000318"/>
    <property type="project" value="GO_Central"/>
</dbReference>
<dbReference type="GO" id="GO:0030168">
    <property type="term" value="P:platelet activation"/>
    <property type="evidence" value="ECO:0000266"/>
    <property type="project" value="RGD"/>
</dbReference>
<dbReference type="GO" id="GO:0010595">
    <property type="term" value="P:positive regulation of endothelial cell migration"/>
    <property type="evidence" value="ECO:0000266"/>
    <property type="project" value="RGD"/>
</dbReference>
<dbReference type="GO" id="GO:0010628">
    <property type="term" value="P:positive regulation of gene expression"/>
    <property type="evidence" value="ECO:0000266"/>
    <property type="project" value="RGD"/>
</dbReference>
<dbReference type="GO" id="GO:0033031">
    <property type="term" value="P:positive regulation of neutrophil apoptotic process"/>
    <property type="evidence" value="ECO:0000266"/>
    <property type="project" value="RGD"/>
</dbReference>
<dbReference type="GO" id="GO:0045429">
    <property type="term" value="P:positive regulation of nitric oxide biosynthetic process"/>
    <property type="evidence" value="ECO:0000266"/>
    <property type="project" value="RGD"/>
</dbReference>
<dbReference type="GO" id="GO:0035022">
    <property type="term" value="P:positive regulation of Rac protein signal transduction"/>
    <property type="evidence" value="ECO:0000266"/>
    <property type="project" value="RGD"/>
</dbReference>
<dbReference type="GO" id="GO:0001952">
    <property type="term" value="P:regulation of cell-matrix adhesion"/>
    <property type="evidence" value="ECO:0000266"/>
    <property type="project" value="RGD"/>
</dbReference>
<dbReference type="GO" id="GO:0002931">
    <property type="term" value="P:response to ischemia"/>
    <property type="evidence" value="ECO:0000266"/>
    <property type="project" value="RGD"/>
</dbReference>
<dbReference type="GO" id="GO:0003376">
    <property type="term" value="P:sphingosine-1-phosphate receptor signaling pathway"/>
    <property type="evidence" value="ECO:0000266"/>
    <property type="project" value="RGD"/>
</dbReference>
<dbReference type="CDD" id="cd08693">
    <property type="entry name" value="C2_PI3K_class_I_beta_delta"/>
    <property type="match status" value="1"/>
</dbReference>
<dbReference type="CDD" id="cd00872">
    <property type="entry name" value="PI3Ka_I"/>
    <property type="match status" value="1"/>
</dbReference>
<dbReference type="CDD" id="cd05173">
    <property type="entry name" value="PI3Kc_IA_beta"/>
    <property type="match status" value="1"/>
</dbReference>
<dbReference type="FunFam" id="1.10.1070.11:FF:000001">
    <property type="entry name" value="Phosphatidylinositol 4,5-bisphosphate 3-kinase catalytic subunit"/>
    <property type="match status" value="1"/>
</dbReference>
<dbReference type="FunFam" id="2.60.40.150:FF:000046">
    <property type="entry name" value="Phosphatidylinositol 4,5-bisphosphate 3-kinase catalytic subunit"/>
    <property type="match status" value="1"/>
</dbReference>
<dbReference type="FunFam" id="1.25.40.70:FF:000004">
    <property type="entry name" value="Phosphatidylinositol 4,5-bisphosphate 3-kinase catalytic subunit beta"/>
    <property type="match status" value="1"/>
</dbReference>
<dbReference type="FunFam" id="3.30.1010.10:FF:000005">
    <property type="entry name" value="Phosphatidylinositol 4,5-bisphosphate 3-kinase catalytic subunit beta"/>
    <property type="match status" value="1"/>
</dbReference>
<dbReference type="FunFam" id="3.10.20.770:FF:000003">
    <property type="entry name" value="phosphatidylinositol 4,5-bisphosphate 3-kinase catalytic subunit beta isoform"/>
    <property type="match status" value="1"/>
</dbReference>
<dbReference type="Gene3D" id="3.10.20.770">
    <property type="match status" value="1"/>
</dbReference>
<dbReference type="Gene3D" id="2.60.40.150">
    <property type="entry name" value="C2 domain"/>
    <property type="match status" value="1"/>
</dbReference>
<dbReference type="Gene3D" id="1.10.1070.11">
    <property type="entry name" value="Phosphatidylinositol 3-/4-kinase, catalytic domain"/>
    <property type="match status" value="1"/>
</dbReference>
<dbReference type="Gene3D" id="3.30.1010.10">
    <property type="entry name" value="Phosphatidylinositol 3-kinase Catalytic Subunit, Chain A, domain 4"/>
    <property type="match status" value="1"/>
</dbReference>
<dbReference type="Gene3D" id="1.25.40.70">
    <property type="entry name" value="Phosphatidylinositol 3-kinase, accessory domain (PIK)"/>
    <property type="match status" value="1"/>
</dbReference>
<dbReference type="InterPro" id="IPR016024">
    <property type="entry name" value="ARM-type_fold"/>
</dbReference>
<dbReference type="InterPro" id="IPR035892">
    <property type="entry name" value="C2_domain_sf"/>
</dbReference>
<dbReference type="InterPro" id="IPR011009">
    <property type="entry name" value="Kinase-like_dom_sf"/>
</dbReference>
<dbReference type="InterPro" id="IPR000403">
    <property type="entry name" value="PI3/4_kinase_cat_dom"/>
</dbReference>
<dbReference type="InterPro" id="IPR036940">
    <property type="entry name" value="PI3/4_kinase_cat_sf"/>
</dbReference>
<dbReference type="InterPro" id="IPR018936">
    <property type="entry name" value="PI3/4_kinase_CS"/>
</dbReference>
<dbReference type="InterPro" id="IPR002420">
    <property type="entry name" value="PI3K-type_C2_dom"/>
</dbReference>
<dbReference type="InterPro" id="IPR003113">
    <property type="entry name" value="PI3K_ABD"/>
</dbReference>
<dbReference type="InterPro" id="IPR001263">
    <property type="entry name" value="PI3K_accessory_dom"/>
</dbReference>
<dbReference type="InterPro" id="IPR042236">
    <property type="entry name" value="PI3K_accessory_sf"/>
</dbReference>
<dbReference type="InterPro" id="IPR000341">
    <property type="entry name" value="PI3K_Ras-bd_dom"/>
</dbReference>
<dbReference type="InterPro" id="IPR037702">
    <property type="entry name" value="PI3Kbeta_dom"/>
</dbReference>
<dbReference type="InterPro" id="IPR015433">
    <property type="entry name" value="PI_Kinase"/>
</dbReference>
<dbReference type="InterPro" id="IPR029071">
    <property type="entry name" value="Ubiquitin-like_domsf"/>
</dbReference>
<dbReference type="PANTHER" id="PTHR10048:SF33">
    <property type="entry name" value="PHOSPHATIDYLINOSITOL 4,5-BISPHOSPHATE 3-KINASE CATALYTIC SUBUNIT BETA ISOFORM"/>
    <property type="match status" value="1"/>
</dbReference>
<dbReference type="PANTHER" id="PTHR10048">
    <property type="entry name" value="PHOSPHATIDYLINOSITOL KINASE"/>
    <property type="match status" value="1"/>
</dbReference>
<dbReference type="Pfam" id="PF00454">
    <property type="entry name" value="PI3_PI4_kinase"/>
    <property type="match status" value="1"/>
</dbReference>
<dbReference type="Pfam" id="PF00792">
    <property type="entry name" value="PI3K_C2"/>
    <property type="match status" value="1"/>
</dbReference>
<dbReference type="Pfam" id="PF02192">
    <property type="entry name" value="PI3K_p85B"/>
    <property type="match status" value="1"/>
</dbReference>
<dbReference type="Pfam" id="PF00794">
    <property type="entry name" value="PI3K_rbd"/>
    <property type="match status" value="1"/>
</dbReference>
<dbReference type="Pfam" id="PF00613">
    <property type="entry name" value="PI3Ka"/>
    <property type="match status" value="1"/>
</dbReference>
<dbReference type="SMART" id="SM00142">
    <property type="entry name" value="PI3K_C2"/>
    <property type="match status" value="1"/>
</dbReference>
<dbReference type="SMART" id="SM00143">
    <property type="entry name" value="PI3K_p85B"/>
    <property type="match status" value="1"/>
</dbReference>
<dbReference type="SMART" id="SM00144">
    <property type="entry name" value="PI3K_rbd"/>
    <property type="match status" value="1"/>
</dbReference>
<dbReference type="SMART" id="SM00145">
    <property type="entry name" value="PI3Ka"/>
    <property type="match status" value="1"/>
</dbReference>
<dbReference type="SMART" id="SM00146">
    <property type="entry name" value="PI3Kc"/>
    <property type="match status" value="1"/>
</dbReference>
<dbReference type="SUPFAM" id="SSF48371">
    <property type="entry name" value="ARM repeat"/>
    <property type="match status" value="1"/>
</dbReference>
<dbReference type="SUPFAM" id="SSF49562">
    <property type="entry name" value="C2 domain (Calcium/lipid-binding domain, CaLB)"/>
    <property type="match status" value="1"/>
</dbReference>
<dbReference type="SUPFAM" id="SSF56112">
    <property type="entry name" value="Protein kinase-like (PK-like)"/>
    <property type="match status" value="1"/>
</dbReference>
<dbReference type="SUPFAM" id="SSF54236">
    <property type="entry name" value="Ubiquitin-like"/>
    <property type="match status" value="1"/>
</dbReference>
<dbReference type="PROSITE" id="PS51547">
    <property type="entry name" value="C2_PI3K"/>
    <property type="match status" value="1"/>
</dbReference>
<dbReference type="PROSITE" id="PS00915">
    <property type="entry name" value="PI3_4_KINASE_1"/>
    <property type="match status" value="1"/>
</dbReference>
<dbReference type="PROSITE" id="PS00916">
    <property type="entry name" value="PI3_4_KINASE_2"/>
    <property type="match status" value="1"/>
</dbReference>
<dbReference type="PROSITE" id="PS50290">
    <property type="entry name" value="PI3_4_KINASE_3"/>
    <property type="match status" value="1"/>
</dbReference>
<dbReference type="PROSITE" id="PS51544">
    <property type="entry name" value="PI3K_ABD"/>
    <property type="match status" value="1"/>
</dbReference>
<dbReference type="PROSITE" id="PS51546">
    <property type="entry name" value="PI3K_RBD"/>
    <property type="match status" value="1"/>
</dbReference>
<dbReference type="PROSITE" id="PS51545">
    <property type="entry name" value="PIK_HELICAL"/>
    <property type="match status" value="1"/>
</dbReference>
<protein>
    <recommendedName>
        <fullName>Phosphatidylinositol 4,5-bisphosphate 3-kinase catalytic subunit beta isoform</fullName>
        <shortName>PI3-kinase subunit beta</shortName>
        <shortName>PI3K-beta</shortName>
        <shortName>PI3Kbeta</shortName>
        <shortName>PtdIns-3-kinase subunit beta</shortName>
        <ecNumber evidence="2">2.7.1.153</ecNumber>
    </recommendedName>
    <alternativeName>
        <fullName>Phosphatidylinositol 4,5-bisphosphate 3-kinase 110 kDa catalytic subunit beta</fullName>
        <shortName>PtdIns-3-kinase subunit p110-beta</shortName>
        <shortName>p110beta</shortName>
    </alternativeName>
    <alternativeName>
        <fullName evidence="2">Serine/threonine protein kinase PIK3CB</fullName>
        <ecNumber evidence="2">2.7.11.1</ecNumber>
    </alternativeName>
</protein>
<comment type="function">
    <text evidence="2">Phosphoinositide-3-kinase (PI3K) phosphorylates phosphatidylinositol (PI) derivatives at position 3 of the inositol ring to produce 3-phosphoinositides. Uses ATP and PtdIns(4,5)P2 (phosphatidylinositol 4,5-bisphosphate) to generate phosphatidylinositol 3,4,5-trisphosphate (PIP3). PIP3 plays a key role by recruiting PH domain-containing proteins to the membrane, including AKT1 and PDPK1, activating signaling cascades involved in cell growth, survival, proliferation, motility and morphology. Involved in the activation of AKT1 upon stimulation by G-protein coupled receptors (GPCRs) ligands such as CXCL12, sphingosine 1-phosphate, and lysophosphatidic acid. May also act downstream receptor tyrosine kinases. Required in different signaling pathways for stable platelet adhesion and aggregation. Plays a role in platelet activation signaling triggered by GPCRs, alpha-IIb/beta-3 integrins (ITGA2B/ ITGB3) and ITAM (immunoreceptor tyrosine-based activation motif)-bearing receptors such as GP6. Regulates the strength of adhesion of ITGA2B/ ITGB3 activated receptors necessary for the cellular transmission of contractile forces. Required for platelet aggregation induced by F2 (thrombin) and thromboxane A2 (TXA2). Has a role in cell survival. May have a role in cell migration. Involved in the early stage of autophagosome formation. Modulates the intracellular level of PtdIns3P (phosphatidylinositol 3-phosphate) and activates PIK3C3 kinase activity. May act as a scaffold, independently of its lipid kinase activity to positively regulate autophagy. May have a role in insulin signaling as scaffolding protein in which the lipid kinase activity is not required. May have a kinase-independent function in regulating cell proliferation and in clathrin-mediated endocytosis. Mediator of oncogenic signal in cell lines lacking PTEN. The lipid kinase activity is necessary for its role in oncogenic transformation. Required for the growth of ERBB2 and RAS driven tumors. Also has a protein kinase activity showing autophosphorylation.</text>
</comment>
<comment type="catalytic activity">
    <reaction evidence="2">
        <text>a 1,2-diacyl-sn-glycero-3-phospho-(1D-myo-inositol-4,5-bisphosphate) + ATP = a 1,2-diacyl-sn-glycero-3-phospho-(1D-myo-inositol-3,4,5-trisphosphate) + ADP + H(+)</text>
        <dbReference type="Rhea" id="RHEA:21292"/>
        <dbReference type="ChEBI" id="CHEBI:15378"/>
        <dbReference type="ChEBI" id="CHEBI:30616"/>
        <dbReference type="ChEBI" id="CHEBI:57836"/>
        <dbReference type="ChEBI" id="CHEBI:58456"/>
        <dbReference type="ChEBI" id="CHEBI:456216"/>
        <dbReference type="EC" id="2.7.1.153"/>
    </reaction>
    <physiologicalReaction direction="left-to-right" evidence="2">
        <dbReference type="Rhea" id="RHEA:21293"/>
    </physiologicalReaction>
</comment>
<comment type="catalytic activity">
    <reaction evidence="2">
        <text>1-octadecanoyl-2-(5Z,8Z,11Z,14Z)-eicosatetraenoyl-sn-glycero-3-phospho-1D-myo-inositol 4,5-bisphosphate + ATP = 1-octadecanoyl-2-(5Z,8Z,11Z,14Z-eicosatetraenoyl)-sn-glycero-3-phospho-(1D-myo-inositol 3,4,5-triphosphate) + ADP + H(+)</text>
        <dbReference type="Rhea" id="RHEA:43396"/>
        <dbReference type="ChEBI" id="CHEBI:15378"/>
        <dbReference type="ChEBI" id="CHEBI:30616"/>
        <dbReference type="ChEBI" id="CHEBI:77137"/>
        <dbReference type="ChEBI" id="CHEBI:83243"/>
        <dbReference type="ChEBI" id="CHEBI:456216"/>
    </reaction>
    <physiologicalReaction direction="left-to-right" evidence="2">
        <dbReference type="Rhea" id="RHEA:43397"/>
    </physiologicalReaction>
</comment>
<comment type="catalytic activity">
    <reaction evidence="2">
        <text>L-seryl-[protein] + ATP = O-phospho-L-seryl-[protein] + ADP + H(+)</text>
        <dbReference type="Rhea" id="RHEA:17989"/>
        <dbReference type="Rhea" id="RHEA-COMP:9863"/>
        <dbReference type="Rhea" id="RHEA-COMP:11604"/>
        <dbReference type="ChEBI" id="CHEBI:15378"/>
        <dbReference type="ChEBI" id="CHEBI:29999"/>
        <dbReference type="ChEBI" id="CHEBI:30616"/>
        <dbReference type="ChEBI" id="CHEBI:83421"/>
        <dbReference type="ChEBI" id="CHEBI:456216"/>
        <dbReference type="EC" id="2.7.11.1"/>
    </reaction>
    <physiologicalReaction direction="left-to-right" evidence="2">
        <dbReference type="Rhea" id="RHEA:17990"/>
    </physiologicalReaction>
</comment>
<comment type="pathway">
    <text evidence="2">Phospholipid metabolism; phosphatidylinositol phosphate biosynthesis.</text>
</comment>
<comment type="subunit">
    <text evidence="1">Heterodimer of a catalytic subunit PIK3CB and a p85 regulatory subunit (PIK3R1, PIK3R2 or PIK3R3). Interaction with PIK3R2 is required for nuclear localization and nuclear export (By similarity). Part of a complex with PIK3R1 and PTEN (By similarity). Binding to PTEN may antagonize the lipid kinase activity under normal growth conditions (By similarity). Part of a complex involved in autophagosome formation composed of PIK3C3 and PIK3R4 (By similarity). Interacts with BECN1, ATG14 and RAB5A (By similarity).</text>
</comment>
<comment type="subcellular location">
    <subcellularLocation>
        <location evidence="1">Cytoplasm</location>
    </subcellularLocation>
    <subcellularLocation>
        <location evidence="1">Nucleus</location>
    </subcellularLocation>
    <text>Interaction with PIK3R2 is required for nuclear localization and export.</text>
</comment>
<comment type="domain">
    <text evidence="1">The inhibitory interactions with PIK3R1 are mediated by the PI3K-ABD domain and the C2 PI3K-type domain with the iSH2 (inter-SH2) region of PIK3R1; the C2 PI3K-type domain, the PI3K helical domain, and the PI3K/PI4K kinase domain with the nSH2 (N-terminal SH2) region of PIK3R1; and the PI3K/PI4K kinase domain with the cSH2 (C-terminal SH2) region of PIK3R1. The inhibitory interaction between the PI3K-ABD domain and the C2 PI3K-type domain with the iSH2 (inter-SH2) region of PIK3R1 is weak. The nuclear localization signal (NLS) is required for its function in cell survival (By similarity).</text>
</comment>
<comment type="PTM">
    <text evidence="2">Autophosphorylation at Ser-1070 negatively regulates the phosphatidylinositol-4,5-bisphosphate 3-kinase activity.</text>
</comment>
<comment type="similarity">
    <text evidence="5 7 8">Belongs to the PI3/PI4-kinase family.</text>
</comment>
<sequence>MCFRSIMPPAMADTLDIWAVDSQIASDGSISVDFLLPTGIYIQLEVPREATISYIKQMLWKQVHNYPMFNLLMDIDSYMFACVNQTAVYEELEDETRRLCDVRPFLPVLKLVTRSCDPAEKLDSKIGVLIGKGLHEFDALKDPEVNEFRRKMRKFSEDKIQSLVGLSWIDWLKHTYPPEHEPSVLENLEDKLYGGKLVVAVHFENSQDVFSFQVSPNLNPIKINELAIQKRLTIRGKEEEASPCDYVLQVSGRVEYVFGDHPLIQFQYIRNCVMNRTLPHFILVECCKIKKMYEQEMIAIEAAINRNSSSLPLPLPPKKTRVISHVWGNNNPFQIVLVKGNKLNTEETVKVHVRAGLFHGTELLCKTVVSSEISGKNDHIWNEQLEFDINICDLPRMARLCFAVYAVLDKVKTKKSTKTINPSKYQTIRKAGKVHYPVAWVNTMVFDFKGQLRSGDVILHSWSSFPDELEEMLNPMGTVQTNPYAENATALHIKFPENKKQPYYYPPFDKIIEKAAEIASGDSANVSSRGGKKFLAVLKEILDRDPLSQLCENEMDLIWTLRQDCRENFPQSLPKLLLSIKWNKLEDVAQLQALLQIWPKLPPREALELLDFNYPDQYVREYAVGCLRQMSDEELSQYLLQLVQVLKYEPFLDCALSRFLLERALDNRRIGQFLFWHLRSEVHTPAVSIQFGVILEAYCRGSVGHMKVLSKQVEALNKLKTLNSLIKLNAMKLNRAKGKEAMHTCLKQSAYREALSDLQSPLNPCVILSELYVEKCRYMDSKMKPLWLVYSNRAFGEDAVGVIFKNGDDLRQDMLTLQMLRLMDLLWKEAGLDLRMLPYGCLATGDRSGLIEVVSTSETIADIQLNSSNVAATAAFNKDALLNWLKEYNSGDDLDRAIEEFTLSCAGYCVASYVLGIGDRHSDNIMVKKTGQLFHIDFGHILGNFKSKFGIKRERVPFILTYDFIHVIQQGKTGNTEKFGRFRQCCEDAYLILRRHGNLFITLFALMLTAGLPELTSVKDIQYLKDSLALGKSEEEALKQFKQKFDEALRESWTTKVNWMAHTVRKDYRS</sequence>
<feature type="chain" id="PRO_0000088789" description="Phosphatidylinositol 4,5-bisphosphate 3-kinase catalytic subunit beta isoform">
    <location>
        <begin position="1"/>
        <end position="1070"/>
    </location>
</feature>
<feature type="domain" description="PI3K-ABD" evidence="5">
    <location>
        <begin position="26"/>
        <end position="115"/>
    </location>
</feature>
<feature type="domain" description="PI3K-RBD" evidence="7">
    <location>
        <begin position="194"/>
        <end position="285"/>
    </location>
</feature>
<feature type="domain" description="C2 PI3K-type" evidence="8">
    <location>
        <begin position="327"/>
        <end position="496"/>
    </location>
</feature>
<feature type="domain" description="PIK helical" evidence="6">
    <location>
        <begin position="524"/>
        <end position="701"/>
    </location>
</feature>
<feature type="domain" description="PI3K/PI4K catalytic" evidence="4">
    <location>
        <begin position="772"/>
        <end position="1053"/>
    </location>
</feature>
<feature type="region of interest" description="G-loop" evidence="4">
    <location>
        <begin position="778"/>
        <end position="784"/>
    </location>
</feature>
<feature type="region of interest" description="Catalytic loop" evidence="4">
    <location>
        <begin position="916"/>
        <end position="924"/>
    </location>
</feature>
<feature type="region of interest" description="Activation loop" evidence="4">
    <location>
        <begin position="935"/>
        <end position="961"/>
    </location>
</feature>
<feature type="short sequence motif" description="Nuclear localization signal (NLS)" evidence="1">
    <location>
        <begin position="410"/>
        <end position="418"/>
    </location>
</feature>
<feature type="modified residue" description="Phosphoserine" evidence="3">
    <location>
        <position position="324"/>
    </location>
</feature>
<feature type="modified residue" description="Phosphoserine; by autocatalysis" evidence="2">
    <location>
        <position position="1070"/>
    </location>
</feature>
<proteinExistence type="evidence at transcript level"/>
<accession>Q9Z1L0</accession>